<organism>
    <name type="scientific">Mycobacterium tuberculosis (strain CDC 1551 / Oshkosh)</name>
    <dbReference type="NCBI Taxonomy" id="83331"/>
    <lineage>
        <taxon>Bacteria</taxon>
        <taxon>Bacillati</taxon>
        <taxon>Actinomycetota</taxon>
        <taxon>Actinomycetes</taxon>
        <taxon>Mycobacteriales</taxon>
        <taxon>Mycobacteriaceae</taxon>
        <taxon>Mycobacterium</taxon>
        <taxon>Mycobacterium tuberculosis complex</taxon>
    </lineage>
</organism>
<accession>P9WPQ8</accession>
<accession>L0T7Y6</accession>
<accession>O08465</accession>
<accession>P63697</accession>
<dbReference type="EC" id="1.16.3.1"/>
<dbReference type="EMBL" id="AE000516">
    <property type="protein sequence ID" value="AAK46197.1"/>
    <property type="molecule type" value="Genomic_DNA"/>
</dbReference>
<dbReference type="PIR" id="A70515">
    <property type="entry name" value="A70515"/>
</dbReference>
<dbReference type="RefSeq" id="WP_003409398.1">
    <property type="nucleotide sequence ID" value="NZ_KK341227.1"/>
</dbReference>
<dbReference type="SMR" id="P9WPQ8"/>
<dbReference type="GeneID" id="45425849"/>
<dbReference type="KEGG" id="mtc:MT1925"/>
<dbReference type="PATRIC" id="fig|83331.31.peg.2072"/>
<dbReference type="HOGENOM" id="CLU_104506_2_0_11"/>
<dbReference type="Proteomes" id="UP000001020">
    <property type="component" value="Chromosome"/>
</dbReference>
<dbReference type="GO" id="GO:0005829">
    <property type="term" value="C:cytosol"/>
    <property type="evidence" value="ECO:0007669"/>
    <property type="project" value="TreeGrafter"/>
</dbReference>
<dbReference type="GO" id="GO:0008199">
    <property type="term" value="F:ferric iron binding"/>
    <property type="evidence" value="ECO:0007669"/>
    <property type="project" value="InterPro"/>
</dbReference>
<dbReference type="GO" id="GO:0004322">
    <property type="term" value="F:ferroxidase activity"/>
    <property type="evidence" value="ECO:0007669"/>
    <property type="project" value="UniProtKB-EC"/>
</dbReference>
<dbReference type="GO" id="GO:0020037">
    <property type="term" value="F:heme binding"/>
    <property type="evidence" value="ECO:0007669"/>
    <property type="project" value="TreeGrafter"/>
</dbReference>
<dbReference type="GO" id="GO:0006879">
    <property type="term" value="P:intracellular iron ion homeostasis"/>
    <property type="evidence" value="ECO:0007669"/>
    <property type="project" value="UniProtKB-KW"/>
</dbReference>
<dbReference type="GO" id="GO:0006826">
    <property type="term" value="P:iron ion transport"/>
    <property type="evidence" value="ECO:0007669"/>
    <property type="project" value="InterPro"/>
</dbReference>
<dbReference type="CDD" id="cd00907">
    <property type="entry name" value="Bacterioferritin"/>
    <property type="match status" value="1"/>
</dbReference>
<dbReference type="FunFam" id="1.20.1260.10:FF:000005">
    <property type="entry name" value="Bacterioferritin"/>
    <property type="match status" value="1"/>
</dbReference>
<dbReference type="Gene3D" id="1.20.1260.10">
    <property type="match status" value="1"/>
</dbReference>
<dbReference type="InterPro" id="IPR002024">
    <property type="entry name" value="Bacterioferritin"/>
</dbReference>
<dbReference type="InterPro" id="IPR012347">
    <property type="entry name" value="Ferritin-like"/>
</dbReference>
<dbReference type="InterPro" id="IPR009040">
    <property type="entry name" value="Ferritin-like_diiron"/>
</dbReference>
<dbReference type="InterPro" id="IPR009078">
    <property type="entry name" value="Ferritin-like_SF"/>
</dbReference>
<dbReference type="InterPro" id="IPR008331">
    <property type="entry name" value="Ferritin_DPS_dom"/>
</dbReference>
<dbReference type="NCBIfam" id="TIGR00754">
    <property type="entry name" value="bfr"/>
    <property type="match status" value="1"/>
</dbReference>
<dbReference type="PANTHER" id="PTHR30295">
    <property type="entry name" value="BACTERIOFERRITIN"/>
    <property type="match status" value="1"/>
</dbReference>
<dbReference type="PANTHER" id="PTHR30295:SF0">
    <property type="entry name" value="BACTERIOFERRITIN"/>
    <property type="match status" value="1"/>
</dbReference>
<dbReference type="Pfam" id="PF00210">
    <property type="entry name" value="Ferritin"/>
    <property type="match status" value="1"/>
</dbReference>
<dbReference type="PIRSF" id="PIRSF002560">
    <property type="entry name" value="Bacterioferritin"/>
    <property type="match status" value="1"/>
</dbReference>
<dbReference type="PRINTS" id="PR00601">
    <property type="entry name" value="BACFERRITIN"/>
</dbReference>
<dbReference type="SUPFAM" id="SSF47240">
    <property type="entry name" value="Ferritin-like"/>
    <property type="match status" value="1"/>
</dbReference>
<dbReference type="PROSITE" id="PS00549">
    <property type="entry name" value="BACTERIOFERRITIN"/>
    <property type="match status" value="1"/>
</dbReference>
<dbReference type="PROSITE" id="PS50905">
    <property type="entry name" value="FERRITIN_LIKE"/>
    <property type="match status" value="1"/>
</dbReference>
<keyword id="KW-0349">Heme</keyword>
<keyword id="KW-0408">Iron</keyword>
<keyword id="KW-0409">Iron storage</keyword>
<keyword id="KW-0479">Metal-binding</keyword>
<keyword id="KW-0560">Oxidoreductase</keyword>
<keyword id="KW-1185">Reference proteome</keyword>
<protein>
    <recommendedName>
        <fullName>Bacterioferritin</fullName>
        <shortName>BFR</shortName>
        <ecNumber>1.16.3.1</ecNumber>
    </recommendedName>
</protein>
<gene>
    <name type="primary">bfr</name>
    <name type="synonym">bfrA</name>
    <name type="ordered locus">MT1925</name>
</gene>
<reference key="1">
    <citation type="journal article" date="2002" name="J. Bacteriol.">
        <title>Whole-genome comparison of Mycobacterium tuberculosis clinical and laboratory strains.</title>
        <authorList>
            <person name="Fleischmann R.D."/>
            <person name="Alland D."/>
            <person name="Eisen J.A."/>
            <person name="Carpenter L."/>
            <person name="White O."/>
            <person name="Peterson J.D."/>
            <person name="DeBoy R.T."/>
            <person name="Dodson R.J."/>
            <person name="Gwinn M.L."/>
            <person name="Haft D.H."/>
            <person name="Hickey E.K."/>
            <person name="Kolonay J.F."/>
            <person name="Nelson W.C."/>
            <person name="Umayam L.A."/>
            <person name="Ermolaeva M.D."/>
            <person name="Salzberg S.L."/>
            <person name="Delcher A."/>
            <person name="Utterback T.R."/>
            <person name="Weidman J.F."/>
            <person name="Khouri H.M."/>
            <person name="Gill J."/>
            <person name="Mikula A."/>
            <person name="Bishai W."/>
            <person name="Jacobs W.R. Jr."/>
            <person name="Venter J.C."/>
            <person name="Fraser C.M."/>
        </authorList>
    </citation>
    <scope>NUCLEOTIDE SEQUENCE [LARGE SCALE GENOMIC DNA]</scope>
    <source>
        <strain>CDC 1551 / Oshkosh</strain>
    </source>
</reference>
<sequence length="159" mass="18341">MQGDPDVLRLLNEQLTSELTAINQYFLHSKMQDNWGFTELAAHTRAESFDEMRHAEEITDRILLLDGLPNYQRIGSLRIGQTLREQFEADLAIEYDVLNRLKPGIVMCREKQDTTSAVLLEKIVADEEEHIDYLETQLELMDKLGEELYSAQCVSRPPT</sequence>
<comment type="function">
    <text evidence="1">Iron-storage protein, whose ferroxidase center binds Fe(2+), oxidizes it using dioxygen to Fe(3+), and participates in the subsequent Fe(3+) oxide mineral core formation within the central cavity of the BFR protein shell.</text>
</comment>
<comment type="catalytic activity">
    <reaction>
        <text>4 Fe(2+) + O2 + 4 H(+) = 4 Fe(3+) + 2 H2O</text>
        <dbReference type="Rhea" id="RHEA:11148"/>
        <dbReference type="ChEBI" id="CHEBI:15377"/>
        <dbReference type="ChEBI" id="CHEBI:15378"/>
        <dbReference type="ChEBI" id="CHEBI:15379"/>
        <dbReference type="ChEBI" id="CHEBI:29033"/>
        <dbReference type="ChEBI" id="CHEBI:29034"/>
        <dbReference type="EC" id="1.16.3.1"/>
    </reaction>
</comment>
<comment type="catalytic activity">
    <reaction evidence="2">
        <text>Fe(2+)(in) = Fe(2+)(out)</text>
        <dbReference type="Rhea" id="RHEA:28486"/>
        <dbReference type="ChEBI" id="CHEBI:29033"/>
    </reaction>
</comment>
<comment type="cofactor">
    <cofactor evidence="1">
        <name>heme b</name>
        <dbReference type="ChEBI" id="CHEBI:60344"/>
    </cofactor>
    <text evidence="1">Binds 1 heme b (iron(II)-protoporphyrin IX) group per dimer.</text>
</comment>
<comment type="subunit">
    <text evidence="1">Homooligomer of 24 subunits, arranged as 12 dimers, that are packed together to form an approximately spherical molecule with a central cavity, in which large amounts of iron can be deposited.</text>
</comment>
<comment type="similarity">
    <text evidence="4">Belongs to the bacterioferritin family.</text>
</comment>
<feature type="chain" id="PRO_0000426909" description="Bacterioferritin">
    <location>
        <begin position="1"/>
        <end position="159"/>
    </location>
</feature>
<feature type="domain" description="Ferritin-like diiron" evidence="3">
    <location>
        <begin position="1"/>
        <end position="145"/>
    </location>
</feature>
<feature type="binding site" evidence="3">
    <location>
        <position position="18"/>
    </location>
    <ligand>
        <name>Fe cation</name>
        <dbReference type="ChEBI" id="CHEBI:24875"/>
        <label>1</label>
    </ligand>
</feature>
<feature type="binding site" evidence="3">
    <location>
        <position position="51"/>
    </location>
    <ligand>
        <name>Fe cation</name>
        <dbReference type="ChEBI" id="CHEBI:24875"/>
        <label>1</label>
    </ligand>
</feature>
<feature type="binding site" evidence="3">
    <location>
        <position position="51"/>
    </location>
    <ligand>
        <name>Fe cation</name>
        <dbReference type="ChEBI" id="CHEBI:24875"/>
        <label>2</label>
    </ligand>
</feature>
<feature type="binding site" description="axial binding residue" evidence="3">
    <location>
        <position position="52"/>
    </location>
    <ligand>
        <name>heme b</name>
        <dbReference type="ChEBI" id="CHEBI:60344"/>
        <note>ligand shared between dimeric partners</note>
    </ligand>
    <ligandPart>
        <name>Fe</name>
        <dbReference type="ChEBI" id="CHEBI:18248"/>
    </ligandPart>
</feature>
<feature type="binding site" evidence="3">
    <location>
        <position position="54"/>
    </location>
    <ligand>
        <name>Fe cation</name>
        <dbReference type="ChEBI" id="CHEBI:24875"/>
        <label>1</label>
    </ligand>
</feature>
<feature type="binding site" evidence="3">
    <location>
        <position position="94"/>
    </location>
    <ligand>
        <name>Fe cation</name>
        <dbReference type="ChEBI" id="CHEBI:24875"/>
        <label>2</label>
    </ligand>
</feature>
<feature type="binding site" evidence="3">
    <location>
        <position position="127"/>
    </location>
    <ligand>
        <name>Fe cation</name>
        <dbReference type="ChEBI" id="CHEBI:24875"/>
        <label>1</label>
    </ligand>
</feature>
<feature type="binding site" evidence="3">
    <location>
        <position position="127"/>
    </location>
    <ligand>
        <name>Fe cation</name>
        <dbReference type="ChEBI" id="CHEBI:24875"/>
        <label>2</label>
    </ligand>
</feature>
<feature type="binding site" evidence="3">
    <location>
        <position position="130"/>
    </location>
    <ligand>
        <name>Fe cation</name>
        <dbReference type="ChEBI" id="CHEBI:24875"/>
        <label>2</label>
    </ligand>
</feature>
<name>BFR_MYCTO</name>
<proteinExistence type="inferred from homology"/>
<evidence type="ECO:0000250" key="1"/>
<evidence type="ECO:0000250" key="2">
    <source>
        <dbReference type="UniProtKB" id="Q9HWF9"/>
    </source>
</evidence>
<evidence type="ECO:0000255" key="3">
    <source>
        <dbReference type="PROSITE-ProRule" id="PRU00085"/>
    </source>
</evidence>
<evidence type="ECO:0000305" key="4"/>